<evidence type="ECO:0000250" key="1"/>
<evidence type="ECO:0000250" key="2">
    <source>
        <dbReference type="UniProtKB" id="P18064"/>
    </source>
</evidence>
<evidence type="ECO:0000255" key="3"/>
<evidence type="ECO:0000255" key="4">
    <source>
        <dbReference type="PROSITE-ProRule" id="PRU01230"/>
    </source>
</evidence>
<evidence type="ECO:0000256" key="5">
    <source>
        <dbReference type="SAM" id="MobiDB-lite"/>
    </source>
</evidence>
<evidence type="ECO:0000305" key="6"/>
<accession>P26981</accession>
<protein>
    <recommendedName>
        <fullName>Guanine nucleotide-binding protein alpha-1 subunit</fullName>
        <shortName>GP-alpha-1</shortName>
    </recommendedName>
</protein>
<name>GPA1_SOLLC</name>
<keyword id="KW-0342">GTP-binding</keyword>
<keyword id="KW-0378">Hydrolase</keyword>
<keyword id="KW-0449">Lipoprotein</keyword>
<keyword id="KW-0460">Magnesium</keyword>
<keyword id="KW-0479">Metal-binding</keyword>
<keyword id="KW-0519">Myristate</keyword>
<keyword id="KW-0547">Nucleotide-binding</keyword>
<keyword id="KW-0564">Palmitate</keyword>
<keyword id="KW-1185">Reference proteome</keyword>
<keyword id="KW-0807">Transducer</keyword>
<gene>
    <name type="primary">GPA1</name>
    <name type="synonym">GA1</name>
</gene>
<reference key="1">
    <citation type="journal article" date="1991" name="Gene">
        <title>Isolation and sequence analysis of TGA1 cDNAs encoding a tomato G protein alpha subunit.</title>
        <authorList>
            <person name="Ma H."/>
            <person name="Yanofsky M.F."/>
            <person name="Huang H."/>
        </authorList>
    </citation>
    <scope>NUCLEOTIDE SEQUENCE [MRNA]</scope>
    <source>
        <strain>cv. VF36</strain>
        <tissue>Pistil</tissue>
    </source>
</reference>
<proteinExistence type="evidence at transcript level"/>
<dbReference type="EMBL" id="M74419">
    <property type="protein sequence ID" value="AAA34167.1"/>
    <property type="molecule type" value="mRNA"/>
</dbReference>
<dbReference type="PIR" id="JH0514">
    <property type="entry name" value="RGTOOA"/>
</dbReference>
<dbReference type="RefSeq" id="NP_001292984.1">
    <property type="nucleotide sequence ID" value="NM_001306055.1"/>
</dbReference>
<dbReference type="SMR" id="P26981"/>
<dbReference type="FunCoup" id="P26981">
    <property type="interactions" value="2109"/>
</dbReference>
<dbReference type="STRING" id="4081.P26981"/>
<dbReference type="PaxDb" id="4081-Solyc08g061220.2.1"/>
<dbReference type="GeneID" id="543985"/>
<dbReference type="KEGG" id="sly:543985"/>
<dbReference type="eggNOG" id="KOG0082">
    <property type="taxonomic scope" value="Eukaryota"/>
</dbReference>
<dbReference type="InParanoid" id="P26981"/>
<dbReference type="OrthoDB" id="5817230at2759"/>
<dbReference type="Proteomes" id="UP000004994">
    <property type="component" value="Unplaced"/>
</dbReference>
<dbReference type="ExpressionAtlas" id="P26981">
    <property type="expression patterns" value="baseline and differential"/>
</dbReference>
<dbReference type="GO" id="GO:0005737">
    <property type="term" value="C:cytoplasm"/>
    <property type="evidence" value="ECO:0000318"/>
    <property type="project" value="GO_Central"/>
</dbReference>
<dbReference type="GO" id="GO:0005834">
    <property type="term" value="C:heterotrimeric G-protein complex"/>
    <property type="evidence" value="ECO:0000318"/>
    <property type="project" value="GO_Central"/>
</dbReference>
<dbReference type="GO" id="GO:0001664">
    <property type="term" value="F:G protein-coupled receptor binding"/>
    <property type="evidence" value="ECO:0000318"/>
    <property type="project" value="GO_Central"/>
</dbReference>
<dbReference type="GO" id="GO:0031683">
    <property type="term" value="F:G-protein beta/gamma-subunit complex binding"/>
    <property type="evidence" value="ECO:0000318"/>
    <property type="project" value="GO_Central"/>
</dbReference>
<dbReference type="GO" id="GO:0005525">
    <property type="term" value="F:GTP binding"/>
    <property type="evidence" value="ECO:0007669"/>
    <property type="project" value="UniProtKB-KW"/>
</dbReference>
<dbReference type="GO" id="GO:0003924">
    <property type="term" value="F:GTPase activity"/>
    <property type="evidence" value="ECO:0000318"/>
    <property type="project" value="GO_Central"/>
</dbReference>
<dbReference type="GO" id="GO:0046872">
    <property type="term" value="F:metal ion binding"/>
    <property type="evidence" value="ECO:0007669"/>
    <property type="project" value="UniProtKB-KW"/>
</dbReference>
<dbReference type="GO" id="GO:0007188">
    <property type="term" value="P:adenylate cyclase-modulating G protein-coupled receptor signaling pathway"/>
    <property type="evidence" value="ECO:0000318"/>
    <property type="project" value="GO_Central"/>
</dbReference>
<dbReference type="CDD" id="cd00066">
    <property type="entry name" value="G-alpha"/>
    <property type="match status" value="1"/>
</dbReference>
<dbReference type="FunFam" id="1.10.400.10:FF:000008">
    <property type="entry name" value="Guanine nucleotide-binding protein alpha-1 subunit"/>
    <property type="match status" value="1"/>
</dbReference>
<dbReference type="FunFam" id="3.40.50.300:FF:000733">
    <property type="entry name" value="Guanine nucleotide-binding protein alpha-1 subunit"/>
    <property type="match status" value="1"/>
</dbReference>
<dbReference type="Gene3D" id="1.10.400.10">
    <property type="entry name" value="GI Alpha 1, domain 2-like"/>
    <property type="match status" value="1"/>
</dbReference>
<dbReference type="Gene3D" id="3.40.50.300">
    <property type="entry name" value="P-loop containing nucleotide triphosphate hydrolases"/>
    <property type="match status" value="1"/>
</dbReference>
<dbReference type="InterPro" id="IPR001019">
    <property type="entry name" value="Gprotein_alpha_su"/>
</dbReference>
<dbReference type="InterPro" id="IPR011025">
    <property type="entry name" value="GproteinA_insert"/>
</dbReference>
<dbReference type="InterPro" id="IPR027417">
    <property type="entry name" value="P-loop_NTPase"/>
</dbReference>
<dbReference type="InterPro" id="IPR002976">
    <property type="entry name" value="Plant_Gprotein_alpha"/>
</dbReference>
<dbReference type="PANTHER" id="PTHR10218">
    <property type="entry name" value="GTP-BINDING PROTEIN ALPHA SUBUNIT"/>
    <property type="match status" value="1"/>
</dbReference>
<dbReference type="PANTHER" id="PTHR10218:SF302">
    <property type="entry name" value="GUANINE NUCLEOTIDE-BINDING PROTEIN ALPHA-5 SUBUNIT"/>
    <property type="match status" value="1"/>
</dbReference>
<dbReference type="Pfam" id="PF00503">
    <property type="entry name" value="G-alpha"/>
    <property type="match status" value="1"/>
</dbReference>
<dbReference type="PRINTS" id="PR00318">
    <property type="entry name" value="GPROTEINA"/>
</dbReference>
<dbReference type="PRINTS" id="PR01242">
    <property type="entry name" value="GPROTEINAPLT"/>
</dbReference>
<dbReference type="SMART" id="SM00275">
    <property type="entry name" value="G_alpha"/>
    <property type="match status" value="1"/>
</dbReference>
<dbReference type="SUPFAM" id="SSF52540">
    <property type="entry name" value="P-loop containing nucleoside triphosphate hydrolases"/>
    <property type="match status" value="1"/>
</dbReference>
<dbReference type="SUPFAM" id="SSF47895">
    <property type="entry name" value="Transducin (alpha subunit), insertion domain"/>
    <property type="match status" value="1"/>
</dbReference>
<dbReference type="PROSITE" id="PS51882">
    <property type="entry name" value="G_ALPHA"/>
    <property type="match status" value="1"/>
</dbReference>
<comment type="function">
    <text>Guanine nucleotide-binding proteins (G proteins) are involved as modulators or transducers in various transmembrane signaling systems.</text>
</comment>
<comment type="cofactor">
    <cofactor evidence="2">
        <name>Mg(2+)</name>
        <dbReference type="ChEBI" id="CHEBI:18420"/>
    </cofactor>
</comment>
<comment type="subunit">
    <text>G proteins are composed of 3 units; alpha, beta and gamma. The alpha chain contains the guanine nucleotide binding site.</text>
</comment>
<comment type="domain">
    <text evidence="1">The helical domain (69-189) is required for self-activation.</text>
</comment>
<comment type="similarity">
    <text evidence="6">Belongs to the G-alpha family.</text>
</comment>
<organism>
    <name type="scientific">Solanum lycopersicum</name>
    <name type="common">Tomato</name>
    <name type="synonym">Lycopersicon esculentum</name>
    <dbReference type="NCBI Taxonomy" id="4081"/>
    <lineage>
        <taxon>Eukaryota</taxon>
        <taxon>Viridiplantae</taxon>
        <taxon>Streptophyta</taxon>
        <taxon>Embryophyta</taxon>
        <taxon>Tracheophyta</taxon>
        <taxon>Spermatophyta</taxon>
        <taxon>Magnoliopsida</taxon>
        <taxon>eudicotyledons</taxon>
        <taxon>Gunneridae</taxon>
        <taxon>Pentapetalae</taxon>
        <taxon>asterids</taxon>
        <taxon>lamiids</taxon>
        <taxon>Solanales</taxon>
        <taxon>Solanaceae</taxon>
        <taxon>Solanoideae</taxon>
        <taxon>Solaneae</taxon>
        <taxon>Solanum</taxon>
        <taxon>Solanum subgen. Lycopersicon</taxon>
    </lineage>
</organism>
<feature type="initiator methionine" description="Removed" evidence="3">
    <location>
        <position position="1"/>
    </location>
</feature>
<feature type="chain" id="PRO_0000203621" description="Guanine nucleotide-binding protein alpha-1 subunit">
    <location>
        <begin position="2"/>
        <end position="384"/>
    </location>
</feature>
<feature type="domain" description="G-alpha" evidence="4">
    <location>
        <begin position="38"/>
        <end position="384"/>
    </location>
</feature>
<feature type="region of interest" description="Disordered" evidence="5">
    <location>
        <begin position="1"/>
        <end position="22"/>
    </location>
</feature>
<feature type="region of interest" description="G1 motif" evidence="4">
    <location>
        <begin position="41"/>
        <end position="54"/>
    </location>
</feature>
<feature type="region of interest" description="G2 motif" evidence="4">
    <location>
        <begin position="186"/>
        <end position="194"/>
    </location>
</feature>
<feature type="region of interest" description="G3 motif" evidence="4">
    <location>
        <begin position="215"/>
        <end position="224"/>
    </location>
</feature>
<feature type="region of interest" description="G4 motif" evidence="4">
    <location>
        <begin position="284"/>
        <end position="291"/>
    </location>
</feature>
<feature type="region of interest" description="G5 motif" evidence="4">
    <location>
        <begin position="354"/>
        <end position="359"/>
    </location>
</feature>
<feature type="binding site" evidence="2">
    <location>
        <position position="49"/>
    </location>
    <ligand>
        <name>GTP</name>
        <dbReference type="ChEBI" id="CHEBI:37565"/>
    </ligand>
</feature>
<feature type="binding site" evidence="2">
    <location>
        <position position="50"/>
    </location>
    <ligand>
        <name>GTP</name>
        <dbReference type="ChEBI" id="CHEBI:37565"/>
    </ligand>
</feature>
<feature type="binding site" evidence="2">
    <location>
        <position position="51"/>
    </location>
    <ligand>
        <name>GTP</name>
        <dbReference type="ChEBI" id="CHEBI:37565"/>
    </ligand>
</feature>
<feature type="binding site" evidence="2">
    <location>
        <position position="52"/>
    </location>
    <ligand>
        <name>GTP</name>
        <dbReference type="ChEBI" id="CHEBI:37565"/>
    </ligand>
</feature>
<feature type="binding site" evidence="2">
    <location>
        <position position="53"/>
    </location>
    <ligand>
        <name>GTP</name>
        <dbReference type="ChEBI" id="CHEBI:37565"/>
    </ligand>
</feature>
<feature type="binding site" evidence="2">
    <location>
        <position position="53"/>
    </location>
    <ligand>
        <name>Mg(2+)</name>
        <dbReference type="ChEBI" id="CHEBI:18420"/>
    </ligand>
</feature>
<feature type="binding site" evidence="2">
    <location>
        <position position="54"/>
    </location>
    <ligand>
        <name>GTP</name>
        <dbReference type="ChEBI" id="CHEBI:37565"/>
    </ligand>
</feature>
<feature type="binding site" evidence="2">
    <location>
        <position position="163"/>
    </location>
    <ligand>
        <name>GTP</name>
        <dbReference type="ChEBI" id="CHEBI:37565"/>
    </ligand>
</feature>
<feature type="binding site" evidence="2">
    <location>
        <position position="188"/>
    </location>
    <ligand>
        <name>GTP</name>
        <dbReference type="ChEBI" id="CHEBI:37565"/>
    </ligand>
</feature>
<feature type="binding site" evidence="2">
    <location>
        <position position="194"/>
    </location>
    <ligand>
        <name>GTP</name>
        <dbReference type="ChEBI" id="CHEBI:37565"/>
    </ligand>
</feature>
<feature type="binding site" evidence="2">
    <location>
        <position position="194"/>
    </location>
    <ligand>
        <name>Mg(2+)</name>
        <dbReference type="ChEBI" id="CHEBI:18420"/>
    </ligand>
</feature>
<feature type="binding site" evidence="2">
    <location>
        <position position="222"/>
    </location>
    <ligand>
        <name>GTP</name>
        <dbReference type="ChEBI" id="CHEBI:37565"/>
    </ligand>
</feature>
<feature type="binding site" evidence="2">
    <location>
        <position position="288"/>
    </location>
    <ligand>
        <name>GTP</name>
        <dbReference type="ChEBI" id="CHEBI:37565"/>
    </ligand>
</feature>
<feature type="binding site" evidence="2">
    <location>
        <position position="289"/>
    </location>
    <ligand>
        <name>GTP</name>
        <dbReference type="ChEBI" id="CHEBI:37565"/>
    </ligand>
</feature>
<feature type="binding site" evidence="2">
    <location>
        <position position="291"/>
    </location>
    <ligand>
        <name>GTP</name>
        <dbReference type="ChEBI" id="CHEBI:37565"/>
    </ligand>
</feature>
<feature type="binding site" evidence="2">
    <location>
        <position position="356"/>
    </location>
    <ligand>
        <name>GTP</name>
        <dbReference type="ChEBI" id="CHEBI:37565"/>
    </ligand>
</feature>
<feature type="lipid moiety-binding region" description="N-myristoyl glycine" evidence="2">
    <location>
        <position position="2"/>
    </location>
</feature>
<feature type="lipid moiety-binding region" description="S-palmitoyl cysteine" evidence="2">
    <location>
        <position position="5"/>
    </location>
</feature>
<sequence>MGSLCSRNKHYSQADDEENTQTAEIERRIEQETKAEKHIQKLLLLGAGDSGKSTIFKQIKLLFQTGFDEEELKNYIPVIHANVYQTTKILHDGSKELAQNELEASKYLLSAENKEIGEKLSEIGGRLDYPHLTKDLVQDIEALWKDPAIQETLLRGNELQVPDCAHYFMENLERFSDVHYIPTKEDVLFARIRTTGVVEIQFSPVGENKKSGEVYRLFDVGGQRNERRKWIHLFEGVTAVIFCAAISEYDQTLFEDERKNRMMETKELFEWVLKQPCFEKTSFMLFLNKFDIFEQKVPKVPLNACEWFKDYQSVSTGKQEIEHAYEFVKKKFEESYFQCTAPDRVDRVFKIYRTTALDQKLVKKTFKLVDETLRRRNLFEAGLL</sequence>